<name>URK_GEOKA</name>
<reference key="1">
    <citation type="journal article" date="2004" name="Nucleic Acids Res.">
        <title>Thermoadaptation trait revealed by the genome sequence of thermophilic Geobacillus kaustophilus.</title>
        <authorList>
            <person name="Takami H."/>
            <person name="Takaki Y."/>
            <person name="Chee G.-J."/>
            <person name="Nishi S."/>
            <person name="Shimamura S."/>
            <person name="Suzuki H."/>
            <person name="Matsui S."/>
            <person name="Uchiyama I."/>
        </authorList>
    </citation>
    <scope>NUCLEOTIDE SEQUENCE [LARGE SCALE GENOMIC DNA]</scope>
    <source>
        <strain>HTA426</strain>
    </source>
</reference>
<evidence type="ECO:0000255" key="1">
    <source>
        <dbReference type="HAMAP-Rule" id="MF_00551"/>
    </source>
</evidence>
<proteinExistence type="inferred from homology"/>
<comment type="catalytic activity">
    <reaction evidence="1">
        <text>uridine + ATP = UMP + ADP + H(+)</text>
        <dbReference type="Rhea" id="RHEA:16825"/>
        <dbReference type="ChEBI" id="CHEBI:15378"/>
        <dbReference type="ChEBI" id="CHEBI:16704"/>
        <dbReference type="ChEBI" id="CHEBI:30616"/>
        <dbReference type="ChEBI" id="CHEBI:57865"/>
        <dbReference type="ChEBI" id="CHEBI:456216"/>
        <dbReference type="EC" id="2.7.1.48"/>
    </reaction>
</comment>
<comment type="catalytic activity">
    <reaction evidence="1">
        <text>cytidine + ATP = CMP + ADP + H(+)</text>
        <dbReference type="Rhea" id="RHEA:24674"/>
        <dbReference type="ChEBI" id="CHEBI:15378"/>
        <dbReference type="ChEBI" id="CHEBI:17562"/>
        <dbReference type="ChEBI" id="CHEBI:30616"/>
        <dbReference type="ChEBI" id="CHEBI:60377"/>
        <dbReference type="ChEBI" id="CHEBI:456216"/>
        <dbReference type="EC" id="2.7.1.48"/>
    </reaction>
</comment>
<comment type="pathway">
    <text evidence="1">Pyrimidine metabolism; CTP biosynthesis via salvage pathway; CTP from cytidine: step 1/3.</text>
</comment>
<comment type="pathway">
    <text evidence="1">Pyrimidine metabolism; UMP biosynthesis via salvage pathway; UMP from uridine: step 1/1.</text>
</comment>
<comment type="subcellular location">
    <subcellularLocation>
        <location evidence="1">Cytoplasm</location>
    </subcellularLocation>
</comment>
<comment type="similarity">
    <text evidence="1">Belongs to the uridine kinase family.</text>
</comment>
<protein>
    <recommendedName>
        <fullName evidence="1">Uridine kinase</fullName>
        <ecNumber evidence="1">2.7.1.48</ecNumber>
    </recommendedName>
    <alternativeName>
        <fullName evidence="1">Cytidine monophosphokinase</fullName>
    </alternativeName>
    <alternativeName>
        <fullName evidence="1">Uridine monophosphokinase</fullName>
    </alternativeName>
</protein>
<gene>
    <name evidence="1" type="primary">udk</name>
    <name type="ordered locus">GK2548</name>
</gene>
<accession>Q5KWV3</accession>
<sequence length="211" mass="24354">MGKKPVVIGVAGGSGSGKTSVARAIYDHFGDRSILVLEQDFYYKDQSHLPFEERLKTNYDHPLAFDNDLLIEHIHKLLRYEPIDKPVYDYTLHTRSSDVIRVEPKDVIIVEGILVLEDERLRNLMDIKVYVDTDPDIRIIRRLIRDIKERGRTFDSVIEQYLSVVRPMHNQFVEPTKRYADVIIPEGGQNVVAIDLMVAKIRTVLEQKAVL</sequence>
<organism>
    <name type="scientific">Geobacillus kaustophilus (strain HTA426)</name>
    <dbReference type="NCBI Taxonomy" id="235909"/>
    <lineage>
        <taxon>Bacteria</taxon>
        <taxon>Bacillati</taxon>
        <taxon>Bacillota</taxon>
        <taxon>Bacilli</taxon>
        <taxon>Bacillales</taxon>
        <taxon>Anoxybacillaceae</taxon>
        <taxon>Geobacillus</taxon>
        <taxon>Geobacillus thermoleovorans group</taxon>
    </lineage>
</organism>
<dbReference type="EC" id="2.7.1.48" evidence="1"/>
<dbReference type="EMBL" id="BA000043">
    <property type="protein sequence ID" value="BAD76833.1"/>
    <property type="molecule type" value="Genomic_DNA"/>
</dbReference>
<dbReference type="RefSeq" id="WP_011232026.1">
    <property type="nucleotide sequence ID" value="NC_006510.1"/>
</dbReference>
<dbReference type="SMR" id="Q5KWV3"/>
<dbReference type="STRING" id="235909.GK2548"/>
<dbReference type="GeneID" id="32064451"/>
<dbReference type="KEGG" id="gka:GK2548"/>
<dbReference type="eggNOG" id="COG0572">
    <property type="taxonomic scope" value="Bacteria"/>
</dbReference>
<dbReference type="HOGENOM" id="CLU_021278_1_2_9"/>
<dbReference type="UniPathway" id="UPA00574">
    <property type="reaction ID" value="UER00637"/>
</dbReference>
<dbReference type="UniPathway" id="UPA00579">
    <property type="reaction ID" value="UER00640"/>
</dbReference>
<dbReference type="Proteomes" id="UP000001172">
    <property type="component" value="Chromosome"/>
</dbReference>
<dbReference type="GO" id="GO:0005737">
    <property type="term" value="C:cytoplasm"/>
    <property type="evidence" value="ECO:0007669"/>
    <property type="project" value="UniProtKB-SubCell"/>
</dbReference>
<dbReference type="GO" id="GO:0005524">
    <property type="term" value="F:ATP binding"/>
    <property type="evidence" value="ECO:0007669"/>
    <property type="project" value="UniProtKB-UniRule"/>
</dbReference>
<dbReference type="GO" id="GO:0043771">
    <property type="term" value="F:cytidine kinase activity"/>
    <property type="evidence" value="ECO:0007669"/>
    <property type="project" value="RHEA"/>
</dbReference>
<dbReference type="GO" id="GO:0004849">
    <property type="term" value="F:uridine kinase activity"/>
    <property type="evidence" value="ECO:0007669"/>
    <property type="project" value="UniProtKB-UniRule"/>
</dbReference>
<dbReference type="GO" id="GO:0044211">
    <property type="term" value="P:CTP salvage"/>
    <property type="evidence" value="ECO:0007669"/>
    <property type="project" value="UniProtKB-UniRule"/>
</dbReference>
<dbReference type="GO" id="GO:0044206">
    <property type="term" value="P:UMP salvage"/>
    <property type="evidence" value="ECO:0007669"/>
    <property type="project" value="UniProtKB-UniRule"/>
</dbReference>
<dbReference type="CDD" id="cd02023">
    <property type="entry name" value="UMPK"/>
    <property type="match status" value="1"/>
</dbReference>
<dbReference type="Gene3D" id="3.40.50.300">
    <property type="entry name" value="P-loop containing nucleotide triphosphate hydrolases"/>
    <property type="match status" value="1"/>
</dbReference>
<dbReference type="HAMAP" id="MF_00551">
    <property type="entry name" value="Uridine_kinase"/>
    <property type="match status" value="1"/>
</dbReference>
<dbReference type="InterPro" id="IPR027417">
    <property type="entry name" value="P-loop_NTPase"/>
</dbReference>
<dbReference type="InterPro" id="IPR006083">
    <property type="entry name" value="PRK/URK"/>
</dbReference>
<dbReference type="InterPro" id="IPR026008">
    <property type="entry name" value="Uridine_kinase"/>
</dbReference>
<dbReference type="InterPro" id="IPR000764">
    <property type="entry name" value="Uridine_kinase-like"/>
</dbReference>
<dbReference type="NCBIfam" id="NF004018">
    <property type="entry name" value="PRK05480.1"/>
    <property type="match status" value="1"/>
</dbReference>
<dbReference type="NCBIfam" id="TIGR00235">
    <property type="entry name" value="udk"/>
    <property type="match status" value="1"/>
</dbReference>
<dbReference type="PANTHER" id="PTHR10285">
    <property type="entry name" value="URIDINE KINASE"/>
    <property type="match status" value="1"/>
</dbReference>
<dbReference type="Pfam" id="PF00485">
    <property type="entry name" value="PRK"/>
    <property type="match status" value="1"/>
</dbReference>
<dbReference type="PRINTS" id="PR00988">
    <property type="entry name" value="URIDINKINASE"/>
</dbReference>
<dbReference type="SUPFAM" id="SSF52540">
    <property type="entry name" value="P-loop containing nucleoside triphosphate hydrolases"/>
    <property type="match status" value="1"/>
</dbReference>
<feature type="chain" id="PRO_1000017875" description="Uridine kinase">
    <location>
        <begin position="1"/>
        <end position="211"/>
    </location>
</feature>
<feature type="binding site" evidence="1">
    <location>
        <begin position="12"/>
        <end position="19"/>
    </location>
    <ligand>
        <name>ATP</name>
        <dbReference type="ChEBI" id="CHEBI:30616"/>
    </ligand>
</feature>
<keyword id="KW-0067">ATP-binding</keyword>
<keyword id="KW-0963">Cytoplasm</keyword>
<keyword id="KW-0418">Kinase</keyword>
<keyword id="KW-0547">Nucleotide-binding</keyword>
<keyword id="KW-1185">Reference proteome</keyword>
<keyword id="KW-0808">Transferase</keyword>